<proteinExistence type="inferred from homology"/>
<organism>
    <name type="scientific">Escherichia coli (strain K12 / DH10B)</name>
    <dbReference type="NCBI Taxonomy" id="316385"/>
    <lineage>
        <taxon>Bacteria</taxon>
        <taxon>Pseudomonadati</taxon>
        <taxon>Pseudomonadota</taxon>
        <taxon>Gammaproteobacteria</taxon>
        <taxon>Enterobacterales</taxon>
        <taxon>Enterobacteriaceae</taxon>
        <taxon>Escherichia</taxon>
    </lineage>
</organism>
<keyword id="KW-0997">Cell inner membrane</keyword>
<keyword id="KW-1003">Cell membrane</keyword>
<keyword id="KW-0472">Membrane</keyword>
<sequence length="85" mass="9381">MAPPLSPGSRVLIALIRVYQRLISPLLGPHCRFTPTCSSYGIEALRRFGVIKGSWLTVKRVLKCHPLHPGGDDPVPPGPFDTREH</sequence>
<reference key="1">
    <citation type="journal article" date="2008" name="J. Bacteriol.">
        <title>The complete genome sequence of Escherichia coli DH10B: insights into the biology of a laboratory workhorse.</title>
        <authorList>
            <person name="Durfee T."/>
            <person name="Nelson R."/>
            <person name="Baldwin S."/>
            <person name="Plunkett G. III"/>
            <person name="Burland V."/>
            <person name="Mau B."/>
            <person name="Petrosino J.F."/>
            <person name="Qin X."/>
            <person name="Muzny D.M."/>
            <person name="Ayele M."/>
            <person name="Gibbs R.A."/>
            <person name="Csorgo B."/>
            <person name="Posfai G."/>
            <person name="Weinstock G.M."/>
            <person name="Blattner F.R."/>
        </authorList>
    </citation>
    <scope>NUCLEOTIDE SEQUENCE [LARGE SCALE GENOMIC DNA]</scope>
    <source>
        <strain>K12 / DH10B</strain>
    </source>
</reference>
<protein>
    <recommendedName>
        <fullName evidence="1">Putative membrane protein insertion efficiency factor</fullName>
    </recommendedName>
</protein>
<feature type="chain" id="PRO_1000122640" description="Putative membrane protein insertion efficiency factor">
    <location>
        <begin position="1"/>
        <end position="85"/>
    </location>
</feature>
<name>YIDD_ECODH</name>
<evidence type="ECO:0000255" key="1">
    <source>
        <dbReference type="HAMAP-Rule" id="MF_00386"/>
    </source>
</evidence>
<dbReference type="EMBL" id="CP000948">
    <property type="protein sequence ID" value="ACB04748.1"/>
    <property type="molecule type" value="Genomic_DNA"/>
</dbReference>
<dbReference type="RefSeq" id="WP_001307474.1">
    <property type="nucleotide sequence ID" value="NC_010473.1"/>
</dbReference>
<dbReference type="GeneID" id="97443257"/>
<dbReference type="KEGG" id="ecd:ECDH10B_3891"/>
<dbReference type="HOGENOM" id="CLU_144811_5_2_6"/>
<dbReference type="GO" id="GO:0005886">
    <property type="term" value="C:plasma membrane"/>
    <property type="evidence" value="ECO:0007669"/>
    <property type="project" value="UniProtKB-SubCell"/>
</dbReference>
<dbReference type="HAMAP" id="MF_00386">
    <property type="entry name" value="UPF0161_YidD"/>
    <property type="match status" value="1"/>
</dbReference>
<dbReference type="InterPro" id="IPR002696">
    <property type="entry name" value="Membr_insert_effic_factor_YidD"/>
</dbReference>
<dbReference type="NCBIfam" id="TIGR00278">
    <property type="entry name" value="membrane protein insertion efficiency factor YidD"/>
    <property type="match status" value="1"/>
</dbReference>
<dbReference type="PANTHER" id="PTHR33383">
    <property type="entry name" value="MEMBRANE PROTEIN INSERTION EFFICIENCY FACTOR-RELATED"/>
    <property type="match status" value="1"/>
</dbReference>
<dbReference type="PANTHER" id="PTHR33383:SF1">
    <property type="entry name" value="MEMBRANE PROTEIN INSERTION EFFICIENCY FACTOR-RELATED"/>
    <property type="match status" value="1"/>
</dbReference>
<dbReference type="Pfam" id="PF01809">
    <property type="entry name" value="YidD"/>
    <property type="match status" value="1"/>
</dbReference>
<dbReference type="SMART" id="SM01234">
    <property type="entry name" value="Haemolytic"/>
    <property type="match status" value="1"/>
</dbReference>
<gene>
    <name evidence="1" type="primary">yidD</name>
    <name type="ordered locus">ECDH10B_3891</name>
</gene>
<comment type="function">
    <text evidence="1">Could be involved in insertion of integral membrane proteins into the membrane.</text>
</comment>
<comment type="subcellular location">
    <subcellularLocation>
        <location evidence="1">Cell inner membrane</location>
        <topology evidence="1">Peripheral membrane protein</topology>
        <orientation evidence="1">Cytoplasmic side</orientation>
    </subcellularLocation>
</comment>
<comment type="similarity">
    <text evidence="1">Belongs to the UPF0161 family.</text>
</comment>
<accession>B1X9T3</accession>